<protein>
    <recommendedName>
        <fullName>Glycoprotein-N-acetylgalactosamine 3-beta-galactosyltransferase 1</fullName>
        <ecNumber evidence="3">2.4.1.122</ecNumber>
    </recommendedName>
    <alternativeName>
        <fullName>Core 1 O-glycan T-synthase</fullName>
        <shortName>T-syn</shortName>
    </alternativeName>
    <alternativeName>
        <fullName>Core 1 UDP-galactose:N-acetylgalactosamine-alpha-R beta 1,3-galactosyltransferase 1</fullName>
    </alternativeName>
    <alternativeName>
        <fullName>Core 1 beta1,3-galactosyltransferase 1</fullName>
        <shortName>C1GalT1</shortName>
        <shortName>Core 1 beta3-Gal-T1</shortName>
    </alternativeName>
</protein>
<proteinExistence type="evidence at protein level"/>
<feature type="chain" id="PRO_0000285065" description="Glycoprotein-N-acetylgalactosamine 3-beta-galactosyltransferase 1">
    <location>
        <begin position="1"/>
        <end position="363"/>
    </location>
</feature>
<feature type="topological domain" description="Cytoplasmic" evidence="4">
    <location>
        <begin position="1"/>
        <end position="8"/>
    </location>
</feature>
<feature type="transmembrane region" description="Helical; Signal-anchor for type II membrane protein" evidence="4">
    <location>
        <begin position="9"/>
        <end position="29"/>
    </location>
</feature>
<feature type="topological domain" description="Lumenal" evidence="4">
    <location>
        <begin position="30"/>
        <end position="363"/>
    </location>
</feature>
<feature type="binding site" evidence="1">
    <location>
        <position position="94"/>
    </location>
    <ligand>
        <name>UDP</name>
        <dbReference type="ChEBI" id="CHEBI:58223"/>
    </ligand>
</feature>
<feature type="binding site" evidence="1">
    <location>
        <position position="138"/>
    </location>
    <ligand>
        <name>UDP</name>
        <dbReference type="ChEBI" id="CHEBI:58223"/>
    </ligand>
</feature>
<feature type="binding site" evidence="1">
    <location>
        <position position="139"/>
    </location>
    <ligand>
        <name>UDP</name>
        <dbReference type="ChEBI" id="CHEBI:58223"/>
    </ligand>
</feature>
<feature type="binding site" evidence="1">
    <location>
        <position position="140"/>
    </location>
    <ligand>
        <name>UDP</name>
        <dbReference type="ChEBI" id="CHEBI:58223"/>
    </ligand>
</feature>
<feature type="binding site" evidence="1">
    <location>
        <position position="146"/>
    </location>
    <ligand>
        <name>UDP</name>
        <dbReference type="ChEBI" id="CHEBI:58223"/>
    </ligand>
</feature>
<feature type="binding site" evidence="1">
    <location>
        <position position="169"/>
    </location>
    <ligand>
        <name>Mn(2+)</name>
        <dbReference type="ChEBI" id="CHEBI:29035"/>
    </ligand>
</feature>
<feature type="binding site" evidence="1">
    <location>
        <position position="169"/>
    </location>
    <ligand>
        <name>UDP</name>
        <dbReference type="ChEBI" id="CHEBI:58223"/>
    </ligand>
</feature>
<feature type="binding site" evidence="1">
    <location>
        <position position="171"/>
    </location>
    <ligand>
        <name>Mn(2+)</name>
        <dbReference type="ChEBI" id="CHEBI:29035"/>
    </ligand>
</feature>
<feature type="binding site" evidence="1">
    <location>
        <position position="285"/>
    </location>
    <ligand>
        <name>a glycoprotein</name>
        <dbReference type="ChEBI" id="CHEBI:17089"/>
    </ligand>
</feature>
<feature type="binding site" evidence="1">
    <location>
        <position position="309"/>
    </location>
    <ligand>
        <name>Mn(2+)</name>
        <dbReference type="ChEBI" id="CHEBI:29035"/>
    </ligand>
</feature>
<feature type="binding site" evidence="1">
    <location>
        <position position="309"/>
    </location>
    <ligand>
        <name>UDP</name>
        <dbReference type="ChEBI" id="CHEBI:58223"/>
    </ligand>
</feature>
<feature type="binding site" evidence="1">
    <location>
        <position position="310"/>
    </location>
    <ligand>
        <name>UDP</name>
        <dbReference type="ChEBI" id="CHEBI:58223"/>
    </ligand>
</feature>
<feature type="modified residue" description="Phosphoserine" evidence="8">
    <location>
        <position position="235"/>
    </location>
</feature>
<feature type="disulfide bond" evidence="1">
    <location>
        <begin position="91"/>
        <end position="115"/>
    </location>
</feature>
<feature type="disulfide bond" evidence="1">
    <location>
        <begin position="232"/>
        <end position="246"/>
    </location>
</feature>
<feature type="disulfide bond" evidence="1">
    <location>
        <begin position="300"/>
        <end position="301"/>
    </location>
</feature>
<feature type="mutagenesis site" description="In plt1; loss of function inducing thrombocytopenia and kidney disease." evidence="6">
    <original>Y</original>
    <variation>N</variation>
    <location>
        <position position="321"/>
    </location>
</feature>
<feature type="sequence conflict" description="In Ref. 2; AAH64767." evidence="7" ref="2">
    <original>N</original>
    <variation>D</variation>
    <location>
        <position position="187"/>
    </location>
</feature>
<feature type="sequence conflict" description="In Ref. 2; AAH64767." evidence="7" ref="2">
    <original>H</original>
    <variation>R</variation>
    <location>
        <position position="325"/>
    </location>
</feature>
<feature type="sequence conflict" description="In Ref. 2; AAH64767." evidence="7" ref="2">
    <original>Y</original>
    <variation>C</variation>
    <location>
        <position position="331"/>
    </location>
</feature>
<dbReference type="EC" id="2.4.1.122" evidence="3"/>
<dbReference type="EMBL" id="AF157962">
    <property type="protein sequence ID" value="AAF81982.1"/>
    <property type="molecule type" value="mRNA"/>
</dbReference>
<dbReference type="EMBL" id="BC025899">
    <property type="protein sequence ID" value="AAH25899.1"/>
    <property type="molecule type" value="mRNA"/>
</dbReference>
<dbReference type="EMBL" id="BC064767">
    <property type="protein sequence ID" value="AAH64767.1"/>
    <property type="molecule type" value="mRNA"/>
</dbReference>
<dbReference type="CCDS" id="CCDS19908.1"/>
<dbReference type="RefSeq" id="NP_443719.3">
    <property type="nucleotide sequence ID" value="NM_052993.3"/>
</dbReference>
<dbReference type="SMR" id="Q9JJ06"/>
<dbReference type="BioGRID" id="220468">
    <property type="interactions" value="2"/>
</dbReference>
<dbReference type="FunCoup" id="Q9JJ06">
    <property type="interactions" value="380"/>
</dbReference>
<dbReference type="STRING" id="10090.ENSMUSP00000047931"/>
<dbReference type="CAZy" id="GT31">
    <property type="family name" value="Glycosyltransferase Family 31"/>
</dbReference>
<dbReference type="iPTMnet" id="Q9JJ06"/>
<dbReference type="PhosphoSitePlus" id="Q9JJ06"/>
<dbReference type="PaxDb" id="10090-ENSMUSP00000047931"/>
<dbReference type="PeptideAtlas" id="Q9JJ06"/>
<dbReference type="ProteomicsDB" id="273725"/>
<dbReference type="Pumba" id="Q9JJ06"/>
<dbReference type="Antibodypedia" id="2308">
    <property type="antibodies" value="137 antibodies from 26 providers"/>
</dbReference>
<dbReference type="DNASU" id="94192"/>
<dbReference type="Ensembl" id="ENSMUST00000040159.6">
    <property type="protein sequence ID" value="ENSMUSP00000047931.5"/>
    <property type="gene ID" value="ENSMUSG00000042460.6"/>
</dbReference>
<dbReference type="GeneID" id="94192"/>
<dbReference type="KEGG" id="mmu:94192"/>
<dbReference type="UCSC" id="uc009axg.2">
    <property type="organism name" value="mouse"/>
</dbReference>
<dbReference type="AGR" id="MGI:2151071"/>
<dbReference type="CTD" id="56913"/>
<dbReference type="MGI" id="MGI:2151071">
    <property type="gene designation" value="C1galt1"/>
</dbReference>
<dbReference type="VEuPathDB" id="HostDB:ENSMUSG00000042460"/>
<dbReference type="eggNOG" id="KOG2246">
    <property type="taxonomic scope" value="Eukaryota"/>
</dbReference>
<dbReference type="GeneTree" id="ENSGT00940000155000"/>
<dbReference type="HOGENOM" id="CLU_035857_0_0_1"/>
<dbReference type="InParanoid" id="Q9JJ06"/>
<dbReference type="OMA" id="WLLSKHD"/>
<dbReference type="OrthoDB" id="414175at2759"/>
<dbReference type="PhylomeDB" id="Q9JJ06"/>
<dbReference type="TreeFam" id="TF317293"/>
<dbReference type="BRENDA" id="2.4.1.122">
    <property type="organism ID" value="3474"/>
</dbReference>
<dbReference type="Reactome" id="R-MMU-913709">
    <property type="pathway name" value="O-linked glycosylation of mucins"/>
</dbReference>
<dbReference type="UniPathway" id="UPA00378"/>
<dbReference type="BioGRID-ORCS" id="94192">
    <property type="hits" value="5 hits in 77 CRISPR screens"/>
</dbReference>
<dbReference type="ChiTaRS" id="C1galt1">
    <property type="organism name" value="mouse"/>
</dbReference>
<dbReference type="PRO" id="PR:Q9JJ06"/>
<dbReference type="Proteomes" id="UP000000589">
    <property type="component" value="Chromosome 6"/>
</dbReference>
<dbReference type="RNAct" id="Q9JJ06">
    <property type="molecule type" value="protein"/>
</dbReference>
<dbReference type="Bgee" id="ENSMUSG00000042460">
    <property type="expression patterns" value="Expressed in epithelium of stomach and 248 other cell types or tissues"/>
</dbReference>
<dbReference type="GO" id="GO:0016020">
    <property type="term" value="C:membrane"/>
    <property type="evidence" value="ECO:0007669"/>
    <property type="project" value="UniProtKB-SubCell"/>
</dbReference>
<dbReference type="GO" id="GO:0008378">
    <property type="term" value="F:galactosyltransferase activity"/>
    <property type="evidence" value="ECO:0000266"/>
    <property type="project" value="MGI"/>
</dbReference>
<dbReference type="GO" id="GO:0016263">
    <property type="term" value="F:glycoprotein-N-acetylgalactosamine 3-beta-galactosyltransferase activity"/>
    <property type="evidence" value="ECO:0007669"/>
    <property type="project" value="UniProtKB-EC"/>
</dbReference>
<dbReference type="GO" id="GO:0046872">
    <property type="term" value="F:metal ion binding"/>
    <property type="evidence" value="ECO:0007669"/>
    <property type="project" value="UniProtKB-KW"/>
</dbReference>
<dbReference type="GO" id="GO:0000166">
    <property type="term" value="F:nucleotide binding"/>
    <property type="evidence" value="ECO:0007669"/>
    <property type="project" value="UniProtKB-KW"/>
</dbReference>
<dbReference type="GO" id="GO:0001525">
    <property type="term" value="P:angiogenesis"/>
    <property type="evidence" value="ECO:0000315"/>
    <property type="project" value="MGI"/>
</dbReference>
<dbReference type="GO" id="GO:0016267">
    <property type="term" value="P:core 1 O-glycan biosynthetic process"/>
    <property type="evidence" value="ECO:0000266"/>
    <property type="project" value="MGI"/>
</dbReference>
<dbReference type="GO" id="GO:0060576">
    <property type="term" value="P:intestinal epithelial cell development"/>
    <property type="evidence" value="ECO:0000315"/>
    <property type="project" value="MGI"/>
</dbReference>
<dbReference type="GO" id="GO:0001822">
    <property type="term" value="P:kidney development"/>
    <property type="evidence" value="ECO:0007669"/>
    <property type="project" value="Ensembl"/>
</dbReference>
<dbReference type="GO" id="GO:0006493">
    <property type="term" value="P:protein O-linked glycosylation"/>
    <property type="evidence" value="ECO:0000315"/>
    <property type="project" value="MGI"/>
</dbReference>
<dbReference type="FunFam" id="3.90.550.50:FF:000007">
    <property type="entry name" value="Glycoprotein-N-acetylgalactosamine 3-beta-galactosyltransferase 1"/>
    <property type="match status" value="1"/>
</dbReference>
<dbReference type="Gene3D" id="3.90.550.50">
    <property type="match status" value="1"/>
</dbReference>
<dbReference type="InterPro" id="IPR026050">
    <property type="entry name" value="C1GALT1/C1GALT1_chp1"/>
</dbReference>
<dbReference type="InterPro" id="IPR003378">
    <property type="entry name" value="Fringe-like_glycosylTrfase"/>
</dbReference>
<dbReference type="PANTHER" id="PTHR23033">
    <property type="entry name" value="BETA1,3-GALACTOSYLTRANSFERASE"/>
    <property type="match status" value="1"/>
</dbReference>
<dbReference type="PANTHER" id="PTHR23033:SF13">
    <property type="entry name" value="GLYCOPROTEIN-N-ACETYLGALACTOSAMINE 3-BETA-GALACTOSYLTRANSFERASE 1"/>
    <property type="match status" value="1"/>
</dbReference>
<dbReference type="Pfam" id="PF02434">
    <property type="entry name" value="Fringe"/>
    <property type="match status" value="1"/>
</dbReference>
<organism>
    <name type="scientific">Mus musculus</name>
    <name type="common">Mouse</name>
    <dbReference type="NCBI Taxonomy" id="10090"/>
    <lineage>
        <taxon>Eukaryota</taxon>
        <taxon>Metazoa</taxon>
        <taxon>Chordata</taxon>
        <taxon>Craniata</taxon>
        <taxon>Vertebrata</taxon>
        <taxon>Euteleostomi</taxon>
        <taxon>Mammalia</taxon>
        <taxon>Eutheria</taxon>
        <taxon>Euarchontoglires</taxon>
        <taxon>Glires</taxon>
        <taxon>Rodentia</taxon>
        <taxon>Myomorpha</taxon>
        <taxon>Muroidea</taxon>
        <taxon>Muridae</taxon>
        <taxon>Murinae</taxon>
        <taxon>Mus</taxon>
        <taxon>Mus</taxon>
    </lineage>
</organism>
<comment type="function">
    <text evidence="1 3 5 6">Glycosyltransferase that generates the core 1 O-glycan Gal-beta1-3GalNAc-alpha1-Ser/Thr (T antigen), which is a precursor for many extended O-glycans in glycoproteins. Plays a central role in many processes, such as angiogenesis, thrombopoiesis and kidney homeostasis development.</text>
</comment>
<comment type="catalytic activity">
    <reaction evidence="3">
        <text>an N-acetyl-alpha-D-galactosaminyl derivative + UDP-alpha-D-galactose = a beta-D-galactosyl-(1-&gt;3)-N-acetyl-alpha-D-galactosaminyl derivative + UDP + H(+)</text>
        <dbReference type="Rhea" id="RHEA:15621"/>
        <dbReference type="ChEBI" id="CHEBI:15378"/>
        <dbReference type="ChEBI" id="CHEBI:28257"/>
        <dbReference type="ChEBI" id="CHEBI:58223"/>
        <dbReference type="ChEBI" id="CHEBI:66914"/>
        <dbReference type="ChEBI" id="CHEBI:133470"/>
        <dbReference type="EC" id="2.4.1.122"/>
    </reaction>
</comment>
<comment type="catalytic activity">
    <reaction evidence="1">
        <text>a 3-O-[N-acetyl-alpha-D-galactosaminyl]-L-threonyl-[protein] + UDP-alpha-D-galactose = a 3-O-[beta-D-galactosyl-(1-&gt;3)-N-acetyl-alpha-D-galactosaminyl]-L-threonyl-[protein] + UDP + H(+)</text>
        <dbReference type="Rhea" id="RHEA:56196"/>
        <dbReference type="Rhea" id="RHEA-COMP:11689"/>
        <dbReference type="Rhea" id="RHEA-COMP:13923"/>
        <dbReference type="ChEBI" id="CHEBI:15378"/>
        <dbReference type="ChEBI" id="CHEBI:58223"/>
        <dbReference type="ChEBI" id="CHEBI:66914"/>
        <dbReference type="ChEBI" id="CHEBI:87075"/>
        <dbReference type="ChEBI" id="CHEBI:137950"/>
    </reaction>
    <physiologicalReaction direction="left-to-right" evidence="1">
        <dbReference type="Rhea" id="RHEA:56197"/>
    </physiologicalReaction>
</comment>
<comment type="catalytic activity">
    <reaction evidence="1">
        <text>a 3-O-[N-acetyl-alpha-D-galactosaminyl]-L-seryl-[protein] + UDP-alpha-D-galactose = a 3-O-[beta-D-galactosyl-(1-&gt;3)-N-acetyl-alpha-D-galactosaminyl]-L-seryl-[protein] + UDP + H(+)</text>
        <dbReference type="Rhea" id="RHEA:56200"/>
        <dbReference type="Rhea" id="RHEA-COMP:12788"/>
        <dbReference type="Rhea" id="RHEA-COMP:13922"/>
        <dbReference type="ChEBI" id="CHEBI:15378"/>
        <dbReference type="ChEBI" id="CHEBI:53604"/>
        <dbReference type="ChEBI" id="CHEBI:58223"/>
        <dbReference type="ChEBI" id="CHEBI:66914"/>
        <dbReference type="ChEBI" id="CHEBI:137949"/>
    </reaction>
    <physiologicalReaction direction="left-to-right" evidence="1">
        <dbReference type="Rhea" id="RHEA:56201"/>
    </physiologicalReaction>
</comment>
<comment type="cofactor">
    <cofactor evidence="2">
        <name>Mn(2+)</name>
        <dbReference type="ChEBI" id="CHEBI:29035"/>
    </cofactor>
</comment>
<comment type="pathway">
    <text evidence="3">Protein modification; protein glycosylation.</text>
</comment>
<comment type="subunit">
    <text evidence="2 3">Homodimer; disulfide-linked (By similarity). Interacts with the C1GALT1C1 chaperone; required for galactosyltransferase activity (By similarity).</text>
</comment>
<comment type="subcellular location">
    <subcellularLocation>
        <location evidence="2">Membrane</location>
        <topology>Single-pass type II membrane protein</topology>
    </subcellularLocation>
</comment>
<comment type="tissue specificity">
    <text evidence="5">Primarily expressed in endothelial, hematopoietic and epithelial cells during development.</text>
</comment>
<comment type="disruption phenotype">
    <text evidence="5">Mice develop brain hemorrhage that cause death at 14 dpc during development. They express the nonsialylated Tn antigen and brains form a chaotic microvascular network with distorted capillary lumens and defective association of endothelial cells with pericytes and extracellular matrix.</text>
</comment>
<comment type="similarity">
    <text evidence="7">Belongs to the glycosyltransferase 31 family. Beta3-Gal-T subfamily.</text>
</comment>
<reference key="1">
    <citation type="journal article" date="2002" name="J. Biol. Chem.">
        <title>Cloning and expression of human core 1 beta1,3-galactosyltransferase.</title>
        <authorList>
            <person name="Ju T."/>
            <person name="Brewer K."/>
            <person name="D'Souza A."/>
            <person name="Cummings R.D."/>
            <person name="Canfield W.M."/>
        </authorList>
    </citation>
    <scope>NUCLEOTIDE SEQUENCE [MRNA]</scope>
</reference>
<reference key="2">
    <citation type="journal article" date="2004" name="Genome Res.">
        <title>The status, quality, and expansion of the NIH full-length cDNA project: the Mammalian Gene Collection (MGC).</title>
        <authorList>
            <consortium name="The MGC Project Team"/>
        </authorList>
    </citation>
    <scope>NUCLEOTIDE SEQUENCE [LARGE SCALE MRNA]</scope>
    <source>
        <strain>C57BL/6NCr</strain>
        <strain>FVB/N</strain>
        <tissue>Hematopoietic stem cell</tissue>
        <tissue>Kidney</tissue>
    </source>
</reference>
<reference key="3">
    <citation type="journal article" date="2004" name="J. Cell Biol.">
        <title>Defective angiogenesis and fatal embryonic hemorrhage in mice lacking core 1-derived O-glycans.</title>
        <authorList>
            <person name="Xia L."/>
            <person name="Ju T."/>
            <person name="Westmuckett A."/>
            <person name="An G."/>
            <person name="Ivanciu L."/>
            <person name="McDaniel J.M."/>
            <person name="Lupu F."/>
            <person name="Cummings R.D."/>
            <person name="McEver R.P."/>
        </authorList>
    </citation>
    <scope>DISRUPTION PHENOTYPE</scope>
    <scope>FUNCTION</scope>
    <scope>TISSUE SPECIFICITY</scope>
</reference>
<reference key="4">
    <citation type="journal article" date="2006" name="Proc. Natl. Acad. Sci. U.S.A.">
        <title>Thrombocytopenia and kidney disease in mice with a mutation in the C1galt1 gene.</title>
        <authorList>
            <person name="Alexander W.S."/>
            <person name="Viney E.M."/>
            <person name="Zhang J.-G."/>
            <person name="Metcalf D."/>
            <person name="Kauppi M."/>
            <person name="Hyland C.D."/>
            <person name="Carpinelli M.R."/>
            <person name="Stevenson W."/>
            <person name="Croker B.A."/>
            <person name="Hilton A.A."/>
            <person name="Ellis S."/>
            <person name="Selan C."/>
            <person name="Nandurkar H.H."/>
            <person name="Goodnow C.C."/>
            <person name="Kile B.T."/>
            <person name="Nicola N.A."/>
            <person name="Roberts A.W."/>
            <person name="Hilton D.J."/>
        </authorList>
    </citation>
    <scope>FUNCTION</scope>
    <scope>MUTAGENESIS OF TYR-321</scope>
</reference>
<reference key="5">
    <citation type="journal article" date="2007" name="Proc. Natl. Acad. Sci. U.S.A.">
        <title>Large-scale phosphorylation analysis of mouse liver.</title>
        <authorList>
            <person name="Villen J."/>
            <person name="Beausoleil S.A."/>
            <person name="Gerber S.A."/>
            <person name="Gygi S.P."/>
        </authorList>
    </citation>
    <scope>PHOSPHORYLATION [LARGE SCALE ANALYSIS] AT SER-235</scope>
    <scope>IDENTIFICATION BY MASS SPECTROMETRY [LARGE SCALE ANALYSIS]</scope>
    <source>
        <tissue>Liver</tissue>
    </source>
</reference>
<reference key="6">
    <citation type="journal article" date="2010" name="Cell">
        <title>A tissue-specific atlas of mouse protein phosphorylation and expression.</title>
        <authorList>
            <person name="Huttlin E.L."/>
            <person name="Jedrychowski M.P."/>
            <person name="Elias J.E."/>
            <person name="Goswami T."/>
            <person name="Rad R."/>
            <person name="Beausoleil S.A."/>
            <person name="Villen J."/>
            <person name="Haas W."/>
            <person name="Sowa M.E."/>
            <person name="Gygi S.P."/>
        </authorList>
    </citation>
    <scope>IDENTIFICATION BY MASS SPECTROMETRY [LARGE SCALE ANALYSIS]</scope>
    <source>
        <tissue>Kidney</tissue>
        <tissue>Spleen</tissue>
    </source>
</reference>
<sequence length="363" mass="42304">MASKSWLNFLVFLCGSAIGFFLCSQLLSILLREEAAIQPNMLHNDPHARHSDDNGHSHLKGQMNFNADSSQHKDENIDVAENLYQKVKILCWVMTSPQNLEKKAKHVKATWAQRCNKVLFMSSEENQDFPTVGLKTKEGREQLYWKTIKAFQYVHDHYLEDADWFMKADDDTYVIVDNLRWLLSKYNPEQPIYFGRRFKPYVKQGYMSGGAGYVLSKEALRRFVNAFKTEKCTHSSSIEDLALGRCMEIINVEAGDSRDTIGKETFHPFVPEHHLIKGYLPKTFWYWNYNYYPPIEGPGCCSDIAVSFHYVDGTTMYELEYLVYHLRPYGYLYRYQPALPENILKEINQVNRKEDTKIKLGNP</sequence>
<accession>Q9JJ06</accession>
<accession>Q6P218</accession>
<accession>Q8R0Z7</accession>
<name>C1GLT_MOUSE</name>
<evidence type="ECO:0000250" key="1">
    <source>
        <dbReference type="UniProtKB" id="Q7K237"/>
    </source>
</evidence>
<evidence type="ECO:0000250" key="2">
    <source>
        <dbReference type="UniProtKB" id="Q9JJ05"/>
    </source>
</evidence>
<evidence type="ECO:0000250" key="3">
    <source>
        <dbReference type="UniProtKB" id="Q9NS00"/>
    </source>
</evidence>
<evidence type="ECO:0000255" key="4"/>
<evidence type="ECO:0000269" key="5">
    <source>
    </source>
</evidence>
<evidence type="ECO:0000269" key="6">
    <source>
    </source>
</evidence>
<evidence type="ECO:0000305" key="7"/>
<evidence type="ECO:0007744" key="8">
    <source>
    </source>
</evidence>
<gene>
    <name type="primary">C1galt1</name>
    <name type="synonym">Plt1</name>
</gene>
<keyword id="KW-0037">Angiogenesis</keyword>
<keyword id="KW-0217">Developmental protein</keyword>
<keyword id="KW-0221">Differentiation</keyword>
<keyword id="KW-1015">Disulfide bond</keyword>
<keyword id="KW-0328">Glycosyltransferase</keyword>
<keyword id="KW-0464">Manganese</keyword>
<keyword id="KW-0472">Membrane</keyword>
<keyword id="KW-0479">Metal-binding</keyword>
<keyword id="KW-0547">Nucleotide-binding</keyword>
<keyword id="KW-0597">Phosphoprotein</keyword>
<keyword id="KW-1185">Reference proteome</keyword>
<keyword id="KW-0735">Signal-anchor</keyword>
<keyword id="KW-0808">Transferase</keyword>
<keyword id="KW-0812">Transmembrane</keyword>
<keyword id="KW-1133">Transmembrane helix</keyword>